<dbReference type="EC" id="6.3.5.-" evidence="1"/>
<dbReference type="EMBL" id="CP000025">
    <property type="protein sequence ID" value="AAW35652.1"/>
    <property type="molecule type" value="Genomic_DNA"/>
</dbReference>
<dbReference type="RefSeq" id="WP_011049898.1">
    <property type="nucleotide sequence ID" value="NC_003912.7"/>
</dbReference>
<dbReference type="SMR" id="Q5HTR7"/>
<dbReference type="KEGG" id="cjr:CJE1331"/>
<dbReference type="HOGENOM" id="CLU_019240_0_0_7"/>
<dbReference type="GO" id="GO:0050566">
    <property type="term" value="F:asparaginyl-tRNA synthase (glutamine-hydrolyzing) activity"/>
    <property type="evidence" value="ECO:0007669"/>
    <property type="project" value="RHEA"/>
</dbReference>
<dbReference type="GO" id="GO:0005524">
    <property type="term" value="F:ATP binding"/>
    <property type="evidence" value="ECO:0007669"/>
    <property type="project" value="UniProtKB-KW"/>
</dbReference>
<dbReference type="GO" id="GO:0050567">
    <property type="term" value="F:glutaminyl-tRNA synthase (glutamine-hydrolyzing) activity"/>
    <property type="evidence" value="ECO:0007669"/>
    <property type="project" value="UniProtKB-UniRule"/>
</dbReference>
<dbReference type="GO" id="GO:0070681">
    <property type="term" value="P:glutaminyl-tRNAGln biosynthesis via transamidation"/>
    <property type="evidence" value="ECO:0007669"/>
    <property type="project" value="TreeGrafter"/>
</dbReference>
<dbReference type="GO" id="GO:0006412">
    <property type="term" value="P:translation"/>
    <property type="evidence" value="ECO:0007669"/>
    <property type="project" value="UniProtKB-UniRule"/>
</dbReference>
<dbReference type="FunFam" id="1.10.10.410:FF:000001">
    <property type="entry name" value="Aspartyl/glutamyl-tRNA(Asn/Gln) amidotransferase subunit B"/>
    <property type="match status" value="1"/>
</dbReference>
<dbReference type="FunFam" id="1.10.150.380:FF:000001">
    <property type="entry name" value="Aspartyl/glutamyl-tRNA(Asn/Gln) amidotransferase subunit B"/>
    <property type="match status" value="1"/>
</dbReference>
<dbReference type="Gene3D" id="1.10.10.410">
    <property type="match status" value="1"/>
</dbReference>
<dbReference type="Gene3D" id="1.10.150.380">
    <property type="entry name" value="GatB domain, N-terminal subdomain"/>
    <property type="match status" value="1"/>
</dbReference>
<dbReference type="HAMAP" id="MF_00121">
    <property type="entry name" value="GatB"/>
    <property type="match status" value="1"/>
</dbReference>
<dbReference type="InterPro" id="IPR017959">
    <property type="entry name" value="Asn/Gln-tRNA_amidoTrfase_suB/E"/>
</dbReference>
<dbReference type="InterPro" id="IPR006075">
    <property type="entry name" value="Asn/Gln-tRNA_Trfase_suB/E_cat"/>
</dbReference>
<dbReference type="InterPro" id="IPR018027">
    <property type="entry name" value="Asn/Gln_amidotransferase"/>
</dbReference>
<dbReference type="InterPro" id="IPR003789">
    <property type="entry name" value="Asn/Gln_tRNA_amidoTrase-B-like"/>
</dbReference>
<dbReference type="InterPro" id="IPR004413">
    <property type="entry name" value="GatB"/>
</dbReference>
<dbReference type="InterPro" id="IPR042114">
    <property type="entry name" value="GatB_C_1"/>
</dbReference>
<dbReference type="InterPro" id="IPR023168">
    <property type="entry name" value="GatB_Yqey_C_2"/>
</dbReference>
<dbReference type="InterPro" id="IPR017958">
    <property type="entry name" value="Gln-tRNA_amidoTrfase_suB_CS"/>
</dbReference>
<dbReference type="InterPro" id="IPR014746">
    <property type="entry name" value="Gln_synth/guanido_kin_cat_dom"/>
</dbReference>
<dbReference type="NCBIfam" id="TIGR00133">
    <property type="entry name" value="gatB"/>
    <property type="match status" value="1"/>
</dbReference>
<dbReference type="NCBIfam" id="NF004012">
    <property type="entry name" value="PRK05477.1-2"/>
    <property type="match status" value="1"/>
</dbReference>
<dbReference type="NCBIfam" id="NF004014">
    <property type="entry name" value="PRK05477.1-4"/>
    <property type="match status" value="1"/>
</dbReference>
<dbReference type="PANTHER" id="PTHR11659">
    <property type="entry name" value="GLUTAMYL-TRNA GLN AMIDOTRANSFERASE SUBUNIT B MITOCHONDRIAL AND PROKARYOTIC PET112-RELATED"/>
    <property type="match status" value="1"/>
</dbReference>
<dbReference type="PANTHER" id="PTHR11659:SF0">
    <property type="entry name" value="GLUTAMYL-TRNA(GLN) AMIDOTRANSFERASE SUBUNIT B, MITOCHONDRIAL"/>
    <property type="match status" value="1"/>
</dbReference>
<dbReference type="Pfam" id="PF02934">
    <property type="entry name" value="GatB_N"/>
    <property type="match status" value="1"/>
</dbReference>
<dbReference type="Pfam" id="PF02637">
    <property type="entry name" value="GatB_Yqey"/>
    <property type="match status" value="1"/>
</dbReference>
<dbReference type="SMART" id="SM00845">
    <property type="entry name" value="GatB_Yqey"/>
    <property type="match status" value="1"/>
</dbReference>
<dbReference type="SUPFAM" id="SSF89095">
    <property type="entry name" value="GatB/YqeY motif"/>
    <property type="match status" value="1"/>
</dbReference>
<dbReference type="SUPFAM" id="SSF55931">
    <property type="entry name" value="Glutamine synthetase/guanido kinase"/>
    <property type="match status" value="1"/>
</dbReference>
<dbReference type="PROSITE" id="PS01234">
    <property type="entry name" value="GATB"/>
    <property type="match status" value="1"/>
</dbReference>
<gene>
    <name evidence="1" type="primary">gatB</name>
    <name type="ordered locus">CJE1331</name>
</gene>
<feature type="chain" id="PRO_0000148773" description="Aspartyl/glutamyl-tRNA(Asn/Gln) amidotransferase subunit B">
    <location>
        <begin position="1"/>
        <end position="472"/>
    </location>
</feature>
<organism>
    <name type="scientific">Campylobacter jejuni (strain RM1221)</name>
    <dbReference type="NCBI Taxonomy" id="195099"/>
    <lineage>
        <taxon>Bacteria</taxon>
        <taxon>Pseudomonadati</taxon>
        <taxon>Campylobacterota</taxon>
        <taxon>Epsilonproteobacteria</taxon>
        <taxon>Campylobacterales</taxon>
        <taxon>Campylobacteraceae</taxon>
        <taxon>Campylobacter</taxon>
    </lineage>
</organism>
<proteinExistence type="inferred from homology"/>
<reference key="1">
    <citation type="journal article" date="2005" name="PLoS Biol.">
        <title>Major structural differences and novel potential virulence mechanisms from the genomes of multiple Campylobacter species.</title>
        <authorList>
            <person name="Fouts D.E."/>
            <person name="Mongodin E.F."/>
            <person name="Mandrell R.E."/>
            <person name="Miller W.G."/>
            <person name="Rasko D.A."/>
            <person name="Ravel J."/>
            <person name="Brinkac L.M."/>
            <person name="DeBoy R.T."/>
            <person name="Parker C.T."/>
            <person name="Daugherty S.C."/>
            <person name="Dodson R.J."/>
            <person name="Durkin A.S."/>
            <person name="Madupu R."/>
            <person name="Sullivan S.A."/>
            <person name="Shetty J.U."/>
            <person name="Ayodeji M.A."/>
            <person name="Shvartsbeyn A."/>
            <person name="Schatz M.C."/>
            <person name="Badger J.H."/>
            <person name="Fraser C.M."/>
            <person name="Nelson K.E."/>
        </authorList>
    </citation>
    <scope>NUCLEOTIDE SEQUENCE [LARGE SCALE GENOMIC DNA]</scope>
    <source>
        <strain>RM1221</strain>
    </source>
</reference>
<sequence>MFEVVIGLEVHTQLNTKTKIFCSCATSFGEAPNTNVCPTCLALPGALPVLNEEAVKKAIAFGKAVNATINKKSVFNRKNYFYPDLPKAYQISQFDIPIVEKGELFINVKGENKRIGITRAHLEEDAGKNIHENNFSKVDLNRAGTPLLEIVSEPELRSSDEAVAYLKKLHSIIRFLDISDANMQEGSFRCDANVSIRPKGDTKLYTRVEIKNLNSFRFIQKAIEYEVKRQSEAWEDGTYEQEVVQETRLFDTTNLVTRSMRGKEEAAEYRYFPDPDLLPVLLKDEFLDIKIPELPDEKKARFIDELGIKESDAEVLISSLEMSRFFESLISQNLNPKLCVNWLNTELMGLLKGELTIENSPVDAQKLGILIKRIEDGTISAKAAKDVLAFVFENTSVEIDEAIEKLGLKQVSDDSAIEAVIEQILNANADKVAEYKSGKEKLFGFFVGQTMKEGKGAFNPAKVNEILKTKLG</sequence>
<evidence type="ECO:0000255" key="1">
    <source>
        <dbReference type="HAMAP-Rule" id="MF_00121"/>
    </source>
</evidence>
<name>GATB_CAMJR</name>
<comment type="function">
    <text evidence="1">Allows the formation of correctly charged Asn-tRNA(Asn) or Gln-tRNA(Gln) through the transamidation of misacylated Asp-tRNA(Asn) or Glu-tRNA(Gln) in organisms which lack either or both of asparaginyl-tRNA or glutaminyl-tRNA synthetases. The reaction takes place in the presence of glutamine and ATP through an activated phospho-Asp-tRNA(Asn) or phospho-Glu-tRNA(Gln).</text>
</comment>
<comment type="catalytic activity">
    <reaction evidence="1">
        <text>L-glutamyl-tRNA(Gln) + L-glutamine + ATP + H2O = L-glutaminyl-tRNA(Gln) + L-glutamate + ADP + phosphate + H(+)</text>
        <dbReference type="Rhea" id="RHEA:17521"/>
        <dbReference type="Rhea" id="RHEA-COMP:9681"/>
        <dbReference type="Rhea" id="RHEA-COMP:9684"/>
        <dbReference type="ChEBI" id="CHEBI:15377"/>
        <dbReference type="ChEBI" id="CHEBI:15378"/>
        <dbReference type="ChEBI" id="CHEBI:29985"/>
        <dbReference type="ChEBI" id="CHEBI:30616"/>
        <dbReference type="ChEBI" id="CHEBI:43474"/>
        <dbReference type="ChEBI" id="CHEBI:58359"/>
        <dbReference type="ChEBI" id="CHEBI:78520"/>
        <dbReference type="ChEBI" id="CHEBI:78521"/>
        <dbReference type="ChEBI" id="CHEBI:456216"/>
    </reaction>
</comment>
<comment type="catalytic activity">
    <reaction evidence="1">
        <text>L-aspartyl-tRNA(Asn) + L-glutamine + ATP + H2O = L-asparaginyl-tRNA(Asn) + L-glutamate + ADP + phosphate + 2 H(+)</text>
        <dbReference type="Rhea" id="RHEA:14513"/>
        <dbReference type="Rhea" id="RHEA-COMP:9674"/>
        <dbReference type="Rhea" id="RHEA-COMP:9677"/>
        <dbReference type="ChEBI" id="CHEBI:15377"/>
        <dbReference type="ChEBI" id="CHEBI:15378"/>
        <dbReference type="ChEBI" id="CHEBI:29985"/>
        <dbReference type="ChEBI" id="CHEBI:30616"/>
        <dbReference type="ChEBI" id="CHEBI:43474"/>
        <dbReference type="ChEBI" id="CHEBI:58359"/>
        <dbReference type="ChEBI" id="CHEBI:78515"/>
        <dbReference type="ChEBI" id="CHEBI:78516"/>
        <dbReference type="ChEBI" id="CHEBI:456216"/>
    </reaction>
</comment>
<comment type="subunit">
    <text evidence="1">Heterotrimer of A, B and C subunits.</text>
</comment>
<comment type="similarity">
    <text evidence="1">Belongs to the GatB/GatE family. GatB subfamily.</text>
</comment>
<accession>Q5HTR7</accession>
<protein>
    <recommendedName>
        <fullName evidence="1">Aspartyl/glutamyl-tRNA(Asn/Gln) amidotransferase subunit B</fullName>
        <shortName evidence="1">Asp/Glu-ADT subunit B</shortName>
        <ecNumber evidence="1">6.3.5.-</ecNumber>
    </recommendedName>
</protein>
<keyword id="KW-0067">ATP-binding</keyword>
<keyword id="KW-0436">Ligase</keyword>
<keyword id="KW-0547">Nucleotide-binding</keyword>
<keyword id="KW-0648">Protein biosynthesis</keyword>